<keyword id="KW-0067">ATP-binding</keyword>
<keyword id="KW-0131">Cell cycle</keyword>
<keyword id="KW-0132">Cell division</keyword>
<keyword id="KW-0133">Cell shape</keyword>
<keyword id="KW-0961">Cell wall biogenesis/degradation</keyword>
<keyword id="KW-0963">Cytoplasm</keyword>
<keyword id="KW-0436">Ligase</keyword>
<keyword id="KW-0547">Nucleotide-binding</keyword>
<keyword id="KW-0573">Peptidoglycan synthesis</keyword>
<organism>
    <name type="scientific">Clavibacter michiganensis subsp. michiganensis (strain NCPPB 382)</name>
    <dbReference type="NCBI Taxonomy" id="443906"/>
    <lineage>
        <taxon>Bacteria</taxon>
        <taxon>Bacillati</taxon>
        <taxon>Actinomycetota</taxon>
        <taxon>Actinomycetes</taxon>
        <taxon>Micrococcales</taxon>
        <taxon>Microbacteriaceae</taxon>
        <taxon>Clavibacter</taxon>
    </lineage>
</organism>
<protein>
    <recommendedName>
        <fullName evidence="1">UDP-N-acetylmuramate--L-alanine ligase</fullName>
        <ecNumber evidence="1">6.3.2.8</ecNumber>
    </recommendedName>
    <alternativeName>
        <fullName evidence="1">UDP-N-acetylmuramoyl-L-alanine synthetase</fullName>
    </alternativeName>
</protein>
<reference key="1">
    <citation type="journal article" date="2008" name="J. Bacteriol.">
        <title>The genome sequence of the tomato-pathogenic actinomycete Clavibacter michiganensis subsp. michiganensis NCPPB382 reveals a large island involved in pathogenicity.</title>
        <authorList>
            <person name="Gartemann K.-H."/>
            <person name="Abt B."/>
            <person name="Bekel T."/>
            <person name="Burger A."/>
            <person name="Engemann J."/>
            <person name="Fluegel M."/>
            <person name="Gaigalat L."/>
            <person name="Goesmann A."/>
            <person name="Graefen I."/>
            <person name="Kalinowski J."/>
            <person name="Kaup O."/>
            <person name="Kirchner O."/>
            <person name="Krause L."/>
            <person name="Linke B."/>
            <person name="McHardy A."/>
            <person name="Meyer F."/>
            <person name="Pohle S."/>
            <person name="Rueckert C."/>
            <person name="Schneiker S."/>
            <person name="Zellermann E.-M."/>
            <person name="Puehler A."/>
            <person name="Eichenlaub R."/>
            <person name="Kaiser O."/>
            <person name="Bartels D."/>
        </authorList>
    </citation>
    <scope>NUCLEOTIDE SEQUENCE [LARGE SCALE GENOMIC DNA]</scope>
    <source>
        <strain>NCPPB 382</strain>
    </source>
</reference>
<proteinExistence type="inferred from homology"/>
<accession>A5CS50</accession>
<sequence>MIAPDLTMDIPTELGRVHFVGIGGSGMSGIARLFLAAGHRVTGSDSRDSDAVQALRELGAEIHVGHDAAHVGDADALVVTGALWQDNPEYVLAKERGLPILHRSQALAWLISGQRLVAVAGAHGKTTSTGMIVTALLEAGRDPSFVNGGVIGGLGVSSAPGSEELFVVEADESDGSFLLYDTSVALITNVDADHLDHYGSHEAFDDAFVRFASAASELVVISSDDPGARRVTARIEGRVVTFGEDPAADIRITDIVTDGPVAFTLTHDGVSRRAALRVPGRHNAINAAGAYAVLVGLGVDPDDAIAGLAGFSGTGRRFELHAEVRGVSVYDDYAHHPTEVRAALEAARTVVGEGRIIAVHQPHLYSRTRMMAGDFARVYEELADHTIVLDVFGAREDPIPGVTGALVSECFEDAGHVDYLPDWQEAADRAAEIARDGDFIVTLSCGDVYRIIPQVIAALERPAGSPQPAASSRPRE</sequence>
<evidence type="ECO:0000255" key="1">
    <source>
        <dbReference type="HAMAP-Rule" id="MF_00046"/>
    </source>
</evidence>
<dbReference type="EC" id="6.3.2.8" evidence="1"/>
<dbReference type="EMBL" id="AM711867">
    <property type="protein sequence ID" value="CAN01914.1"/>
    <property type="molecule type" value="Genomic_DNA"/>
</dbReference>
<dbReference type="RefSeq" id="WP_012038545.1">
    <property type="nucleotide sequence ID" value="NC_009480.1"/>
</dbReference>
<dbReference type="SMR" id="A5CS50"/>
<dbReference type="KEGG" id="cmi:CMM_1858"/>
<dbReference type="eggNOG" id="COG0773">
    <property type="taxonomic scope" value="Bacteria"/>
</dbReference>
<dbReference type="HOGENOM" id="CLU_028104_2_2_11"/>
<dbReference type="OrthoDB" id="9804126at2"/>
<dbReference type="UniPathway" id="UPA00219"/>
<dbReference type="Proteomes" id="UP000001564">
    <property type="component" value="Chromosome"/>
</dbReference>
<dbReference type="GO" id="GO:0005737">
    <property type="term" value="C:cytoplasm"/>
    <property type="evidence" value="ECO:0007669"/>
    <property type="project" value="UniProtKB-SubCell"/>
</dbReference>
<dbReference type="GO" id="GO:0005524">
    <property type="term" value="F:ATP binding"/>
    <property type="evidence" value="ECO:0007669"/>
    <property type="project" value="UniProtKB-UniRule"/>
</dbReference>
<dbReference type="GO" id="GO:0008763">
    <property type="term" value="F:UDP-N-acetylmuramate-L-alanine ligase activity"/>
    <property type="evidence" value="ECO:0007669"/>
    <property type="project" value="UniProtKB-UniRule"/>
</dbReference>
<dbReference type="GO" id="GO:0051301">
    <property type="term" value="P:cell division"/>
    <property type="evidence" value="ECO:0007669"/>
    <property type="project" value="UniProtKB-KW"/>
</dbReference>
<dbReference type="GO" id="GO:0071555">
    <property type="term" value="P:cell wall organization"/>
    <property type="evidence" value="ECO:0007669"/>
    <property type="project" value="UniProtKB-KW"/>
</dbReference>
<dbReference type="GO" id="GO:0009252">
    <property type="term" value="P:peptidoglycan biosynthetic process"/>
    <property type="evidence" value="ECO:0007669"/>
    <property type="project" value="UniProtKB-UniRule"/>
</dbReference>
<dbReference type="GO" id="GO:0008360">
    <property type="term" value="P:regulation of cell shape"/>
    <property type="evidence" value="ECO:0007669"/>
    <property type="project" value="UniProtKB-KW"/>
</dbReference>
<dbReference type="Gene3D" id="3.90.190.20">
    <property type="entry name" value="Mur ligase, C-terminal domain"/>
    <property type="match status" value="1"/>
</dbReference>
<dbReference type="Gene3D" id="3.40.1190.10">
    <property type="entry name" value="Mur-like, catalytic domain"/>
    <property type="match status" value="1"/>
</dbReference>
<dbReference type="Gene3D" id="3.40.50.720">
    <property type="entry name" value="NAD(P)-binding Rossmann-like Domain"/>
    <property type="match status" value="1"/>
</dbReference>
<dbReference type="HAMAP" id="MF_00046">
    <property type="entry name" value="MurC"/>
    <property type="match status" value="1"/>
</dbReference>
<dbReference type="InterPro" id="IPR036565">
    <property type="entry name" value="Mur-like_cat_sf"/>
</dbReference>
<dbReference type="InterPro" id="IPR004101">
    <property type="entry name" value="Mur_ligase_C"/>
</dbReference>
<dbReference type="InterPro" id="IPR036615">
    <property type="entry name" value="Mur_ligase_C_dom_sf"/>
</dbReference>
<dbReference type="InterPro" id="IPR013221">
    <property type="entry name" value="Mur_ligase_cen"/>
</dbReference>
<dbReference type="InterPro" id="IPR000713">
    <property type="entry name" value="Mur_ligase_N"/>
</dbReference>
<dbReference type="InterPro" id="IPR050061">
    <property type="entry name" value="MurCDEF_pg_biosynth"/>
</dbReference>
<dbReference type="InterPro" id="IPR005758">
    <property type="entry name" value="UDP-N-AcMur_Ala_ligase_MurC"/>
</dbReference>
<dbReference type="NCBIfam" id="TIGR01082">
    <property type="entry name" value="murC"/>
    <property type="match status" value="1"/>
</dbReference>
<dbReference type="PANTHER" id="PTHR43445:SF3">
    <property type="entry name" value="UDP-N-ACETYLMURAMATE--L-ALANINE LIGASE"/>
    <property type="match status" value="1"/>
</dbReference>
<dbReference type="PANTHER" id="PTHR43445">
    <property type="entry name" value="UDP-N-ACETYLMURAMATE--L-ALANINE LIGASE-RELATED"/>
    <property type="match status" value="1"/>
</dbReference>
<dbReference type="Pfam" id="PF01225">
    <property type="entry name" value="Mur_ligase"/>
    <property type="match status" value="1"/>
</dbReference>
<dbReference type="Pfam" id="PF02875">
    <property type="entry name" value="Mur_ligase_C"/>
    <property type="match status" value="1"/>
</dbReference>
<dbReference type="Pfam" id="PF08245">
    <property type="entry name" value="Mur_ligase_M"/>
    <property type="match status" value="1"/>
</dbReference>
<dbReference type="SUPFAM" id="SSF51984">
    <property type="entry name" value="MurCD N-terminal domain"/>
    <property type="match status" value="1"/>
</dbReference>
<dbReference type="SUPFAM" id="SSF53623">
    <property type="entry name" value="MurD-like peptide ligases, catalytic domain"/>
    <property type="match status" value="1"/>
</dbReference>
<dbReference type="SUPFAM" id="SSF53244">
    <property type="entry name" value="MurD-like peptide ligases, peptide-binding domain"/>
    <property type="match status" value="1"/>
</dbReference>
<comment type="function">
    <text evidence="1">Cell wall formation.</text>
</comment>
<comment type="catalytic activity">
    <reaction evidence="1">
        <text>UDP-N-acetyl-alpha-D-muramate + L-alanine + ATP = UDP-N-acetyl-alpha-D-muramoyl-L-alanine + ADP + phosphate + H(+)</text>
        <dbReference type="Rhea" id="RHEA:23372"/>
        <dbReference type="ChEBI" id="CHEBI:15378"/>
        <dbReference type="ChEBI" id="CHEBI:30616"/>
        <dbReference type="ChEBI" id="CHEBI:43474"/>
        <dbReference type="ChEBI" id="CHEBI:57972"/>
        <dbReference type="ChEBI" id="CHEBI:70757"/>
        <dbReference type="ChEBI" id="CHEBI:83898"/>
        <dbReference type="ChEBI" id="CHEBI:456216"/>
        <dbReference type="EC" id="6.3.2.8"/>
    </reaction>
</comment>
<comment type="pathway">
    <text evidence="1">Cell wall biogenesis; peptidoglycan biosynthesis.</text>
</comment>
<comment type="subcellular location">
    <subcellularLocation>
        <location evidence="1">Cytoplasm</location>
    </subcellularLocation>
</comment>
<comment type="similarity">
    <text evidence="1">Belongs to the MurCDEF family.</text>
</comment>
<feature type="chain" id="PRO_0000336822" description="UDP-N-acetylmuramate--L-alanine ligase">
    <location>
        <begin position="1"/>
        <end position="476"/>
    </location>
</feature>
<feature type="binding site" evidence="1">
    <location>
        <begin position="121"/>
        <end position="127"/>
    </location>
    <ligand>
        <name>ATP</name>
        <dbReference type="ChEBI" id="CHEBI:30616"/>
    </ligand>
</feature>
<name>MURC_CLAM3</name>
<gene>
    <name evidence="1" type="primary">murC</name>
    <name type="ordered locus">CMM_1858</name>
</gene>